<proteinExistence type="inferred from homology"/>
<comment type="function">
    <text evidence="1">NDH shuttles electrons from NAD(P)H:plastoquinone, via FMN and iron-sulfur (Fe-S) centers, to quinones in the photosynthetic chain and possibly in a chloroplast respiratory chain. The immediate electron acceptor for the enzyme in this species is believed to be plastoquinone. Couples the redox reaction to proton translocation, and thus conserves the redox energy in a proton gradient (By similarity).</text>
</comment>
<comment type="catalytic activity">
    <reaction>
        <text>a plastoquinone + NADH + (n+1) H(+)(in) = a plastoquinol + NAD(+) + n H(+)(out)</text>
        <dbReference type="Rhea" id="RHEA:42608"/>
        <dbReference type="Rhea" id="RHEA-COMP:9561"/>
        <dbReference type="Rhea" id="RHEA-COMP:9562"/>
        <dbReference type="ChEBI" id="CHEBI:15378"/>
        <dbReference type="ChEBI" id="CHEBI:17757"/>
        <dbReference type="ChEBI" id="CHEBI:57540"/>
        <dbReference type="ChEBI" id="CHEBI:57945"/>
        <dbReference type="ChEBI" id="CHEBI:62192"/>
    </reaction>
</comment>
<comment type="catalytic activity">
    <reaction>
        <text>a plastoquinone + NADPH + (n+1) H(+)(in) = a plastoquinol + NADP(+) + n H(+)(out)</text>
        <dbReference type="Rhea" id="RHEA:42612"/>
        <dbReference type="Rhea" id="RHEA-COMP:9561"/>
        <dbReference type="Rhea" id="RHEA-COMP:9562"/>
        <dbReference type="ChEBI" id="CHEBI:15378"/>
        <dbReference type="ChEBI" id="CHEBI:17757"/>
        <dbReference type="ChEBI" id="CHEBI:57783"/>
        <dbReference type="ChEBI" id="CHEBI:58349"/>
        <dbReference type="ChEBI" id="CHEBI:62192"/>
    </reaction>
</comment>
<comment type="subunit">
    <text evidence="1">NDH is composed of at least 16 different subunits, 5 of which are encoded in the nucleus.</text>
</comment>
<comment type="subcellular location">
    <subcellularLocation>
        <location evidence="1">Plastid</location>
        <location evidence="1">Chloroplast thylakoid membrane</location>
        <topology evidence="1">Multi-pass membrane protein</topology>
    </subcellularLocation>
</comment>
<comment type="similarity">
    <text evidence="3">Belongs to the complex I subunit 5 family.</text>
</comment>
<sequence>MEQTYQYAWIIPFLPLPVPMLIGVGLLLFPTATKNLRRMWAFTSILLLSIVMIFATNLSIQQINTSSIYQYVWSWTLDNDFSLEFGYLIDPLTSIMSMLITTVGIMVLIYSDNYMAHDQGYLRFFAYMSFFSTSMFGLVTSSNLIQIYIFWELVGMCSYLLIGFWFTRPPAANACQKAFVTNRVGDFGLLLGILGFYWITGSFEFRDLFQIFNNLISNNEVNSPFVTLCAALLFAGAVAKSAQFPLHIWLPDAMEGPTPISALIHAATMVAAGIFLVARLLTLFIVIPYILNIISLIGLITVLLGATLALAQKDIKRGLAYSTMSQLGYMILALGIGSYRSALFHLITHAYSKALLFLGSGSVIHSMETIVGYSPDKSQNMVLMGGLTKHVPITKTSFLLGTLSLSGIPPLACFWSKDEILNDSWLYSPIFAIIAWATAGLTAFYMFRIYLLTFEGHLNCHFQNYSGSQNTSLYSISLWGSTCSQRINKNFHLLRMNNNESSSFFSKKTYRSDQTLRKTNRGRPFINIVHFDTKKPFSYPYESDNTMLFPLLVLVLFTLFVGSIGIPFNQEGTDLDILSKWLAPSINLLHQKSKDSTDWYEFLKDAIFSVSIAYFGIFLASFLYKPIYSSLKNFDFINFFVKTGPKRYRWDKILTVLYDWSYNRAYIDPFYTTCFTGAIRGLAQLTYFFDRRVIDGITNGVGIMSFFLGEGIKYASGGRISSYLFFYFCCVSIFLVIYYKFYLFSLYIPF</sequence>
<reference key="1">
    <citation type="journal article" date="2000" name="Mol. Phylogenet. Evol.">
        <title>The phylogeny of the asteridae sensu lato based on chloroplast ndhF gene sequences.</title>
        <authorList>
            <person name="Olmstead R.G."/>
            <person name="Kim K.-J."/>
            <person name="Jansen R.K."/>
            <person name="Wagstaff S.J."/>
        </authorList>
    </citation>
    <scope>NUCLEOTIDE SEQUENCE [GENOMIC DNA]</scope>
</reference>
<feature type="chain" id="PRO_0000118205" description="NAD(P)H-quinone oxidoreductase subunit 5, chloroplastic">
    <location>
        <begin position="1"/>
        <end position="750"/>
    </location>
</feature>
<feature type="transmembrane region" description="Helical" evidence="2">
    <location>
        <begin position="9"/>
        <end position="29"/>
    </location>
</feature>
<feature type="transmembrane region" description="Helical" evidence="2">
    <location>
        <begin position="40"/>
        <end position="60"/>
    </location>
</feature>
<feature type="transmembrane region" description="Helical" evidence="2">
    <location>
        <begin position="89"/>
        <end position="109"/>
    </location>
</feature>
<feature type="transmembrane region" description="Helical" evidence="2">
    <location>
        <begin position="125"/>
        <end position="145"/>
    </location>
</feature>
<feature type="transmembrane region" description="Helical" evidence="2">
    <location>
        <begin position="147"/>
        <end position="167"/>
    </location>
</feature>
<feature type="transmembrane region" description="Helical" evidence="2">
    <location>
        <begin position="185"/>
        <end position="205"/>
    </location>
</feature>
<feature type="transmembrane region" description="Helical" evidence="2">
    <location>
        <begin position="230"/>
        <end position="250"/>
    </location>
</feature>
<feature type="transmembrane region" description="Helical" evidence="2">
    <location>
        <begin position="258"/>
        <end position="278"/>
    </location>
</feature>
<feature type="transmembrane region" description="Helical" evidence="2">
    <location>
        <begin position="283"/>
        <end position="303"/>
    </location>
</feature>
<feature type="transmembrane region" description="Helical" evidence="2">
    <location>
        <begin position="327"/>
        <end position="347"/>
    </location>
</feature>
<feature type="transmembrane region" description="Helical" evidence="2">
    <location>
        <begin position="354"/>
        <end position="374"/>
    </location>
</feature>
<feature type="transmembrane region" description="Helical" evidence="2">
    <location>
        <begin position="396"/>
        <end position="416"/>
    </location>
</feature>
<feature type="transmembrane region" description="Helical" evidence="2">
    <location>
        <begin position="425"/>
        <end position="445"/>
    </location>
</feature>
<feature type="transmembrane region" description="Helical" evidence="2">
    <location>
        <begin position="548"/>
        <end position="568"/>
    </location>
</feature>
<feature type="transmembrane region" description="Helical" evidence="2">
    <location>
        <begin position="607"/>
        <end position="627"/>
    </location>
</feature>
<feature type="transmembrane region" description="Helical" evidence="2">
    <location>
        <begin position="724"/>
        <end position="744"/>
    </location>
</feature>
<protein>
    <recommendedName>
        <fullName>NAD(P)H-quinone oxidoreductase subunit 5, chloroplastic</fullName>
        <ecNumber>7.1.1.-</ecNumber>
    </recommendedName>
    <alternativeName>
        <fullName>NAD(P)H dehydrogenase subunit 5</fullName>
    </alternativeName>
    <alternativeName>
        <fullName>NADH-plastoquinone oxidoreductase subunit 5</fullName>
    </alternativeName>
</protein>
<gene>
    <name type="primary">ndhF</name>
</gene>
<name>NU5C_TECST</name>
<organism>
    <name type="scientific">Tecoma stans</name>
    <name type="common">Yellow bells</name>
    <name type="synonym">Stenolobium stans</name>
    <dbReference type="NCBI Taxonomy" id="69904"/>
    <lineage>
        <taxon>Eukaryota</taxon>
        <taxon>Viridiplantae</taxon>
        <taxon>Streptophyta</taxon>
        <taxon>Embryophyta</taxon>
        <taxon>Tracheophyta</taxon>
        <taxon>Spermatophyta</taxon>
        <taxon>Magnoliopsida</taxon>
        <taxon>eudicotyledons</taxon>
        <taxon>Gunneridae</taxon>
        <taxon>Pentapetalae</taxon>
        <taxon>asterids</taxon>
        <taxon>lamiids</taxon>
        <taxon>Lamiales</taxon>
        <taxon>Bignoniaceae</taxon>
        <taxon>Tecomeae</taxon>
        <taxon>Tecoma</taxon>
    </lineage>
</organism>
<dbReference type="EC" id="7.1.1.-"/>
<dbReference type="EMBL" id="AF130145">
    <property type="protein sequence ID" value="AAF08107.1"/>
    <property type="molecule type" value="Genomic_DNA"/>
</dbReference>
<dbReference type="SMR" id="Q9TLC2"/>
<dbReference type="GO" id="GO:0009535">
    <property type="term" value="C:chloroplast thylakoid membrane"/>
    <property type="evidence" value="ECO:0007669"/>
    <property type="project" value="UniProtKB-SubCell"/>
</dbReference>
<dbReference type="GO" id="GO:0008137">
    <property type="term" value="F:NADH dehydrogenase (ubiquinone) activity"/>
    <property type="evidence" value="ECO:0007669"/>
    <property type="project" value="InterPro"/>
</dbReference>
<dbReference type="GO" id="GO:0048038">
    <property type="term" value="F:quinone binding"/>
    <property type="evidence" value="ECO:0007669"/>
    <property type="project" value="UniProtKB-KW"/>
</dbReference>
<dbReference type="GO" id="GO:0042773">
    <property type="term" value="P:ATP synthesis coupled electron transport"/>
    <property type="evidence" value="ECO:0007669"/>
    <property type="project" value="InterPro"/>
</dbReference>
<dbReference type="GO" id="GO:0015990">
    <property type="term" value="P:electron transport coupled proton transport"/>
    <property type="evidence" value="ECO:0007669"/>
    <property type="project" value="TreeGrafter"/>
</dbReference>
<dbReference type="Gene3D" id="1.20.5.2700">
    <property type="match status" value="1"/>
</dbReference>
<dbReference type="InterPro" id="IPR002128">
    <property type="entry name" value="NADH_UbQ_OxRdtase_chlpt_su5_C"/>
</dbReference>
<dbReference type="InterPro" id="IPR018393">
    <property type="entry name" value="NADHpl_OxRdtase_5_subgr"/>
</dbReference>
<dbReference type="InterPro" id="IPR001750">
    <property type="entry name" value="ND/Mrp_TM"/>
</dbReference>
<dbReference type="InterPro" id="IPR003945">
    <property type="entry name" value="NU5C-like"/>
</dbReference>
<dbReference type="InterPro" id="IPR001516">
    <property type="entry name" value="Proton_antipo_N"/>
</dbReference>
<dbReference type="NCBIfam" id="TIGR01974">
    <property type="entry name" value="NDH_I_L"/>
    <property type="match status" value="1"/>
</dbReference>
<dbReference type="NCBIfam" id="NF005141">
    <property type="entry name" value="PRK06590.1"/>
    <property type="match status" value="1"/>
</dbReference>
<dbReference type="PANTHER" id="PTHR42829">
    <property type="entry name" value="NADH-UBIQUINONE OXIDOREDUCTASE CHAIN 5"/>
    <property type="match status" value="1"/>
</dbReference>
<dbReference type="PANTHER" id="PTHR42829:SF2">
    <property type="entry name" value="NADH-UBIQUINONE OXIDOREDUCTASE CHAIN 5"/>
    <property type="match status" value="1"/>
</dbReference>
<dbReference type="Pfam" id="PF01010">
    <property type="entry name" value="Proton_antipo_C"/>
    <property type="match status" value="1"/>
</dbReference>
<dbReference type="Pfam" id="PF00361">
    <property type="entry name" value="Proton_antipo_M"/>
    <property type="match status" value="1"/>
</dbReference>
<dbReference type="Pfam" id="PF00662">
    <property type="entry name" value="Proton_antipo_N"/>
    <property type="match status" value="1"/>
</dbReference>
<dbReference type="PRINTS" id="PR01434">
    <property type="entry name" value="NADHDHGNASE5"/>
</dbReference>
<dbReference type="PRINTS" id="PR01435">
    <property type="entry name" value="NPOXDRDTASE5"/>
</dbReference>
<accession>Q9TLC2</accession>
<keyword id="KW-0150">Chloroplast</keyword>
<keyword id="KW-0472">Membrane</keyword>
<keyword id="KW-0520">NAD</keyword>
<keyword id="KW-0521">NADP</keyword>
<keyword id="KW-0934">Plastid</keyword>
<keyword id="KW-0618">Plastoquinone</keyword>
<keyword id="KW-0874">Quinone</keyword>
<keyword id="KW-0793">Thylakoid</keyword>
<keyword id="KW-1278">Translocase</keyword>
<keyword id="KW-0812">Transmembrane</keyword>
<keyword id="KW-1133">Transmembrane helix</keyword>
<keyword id="KW-0813">Transport</keyword>
<evidence type="ECO:0000250" key="1"/>
<evidence type="ECO:0000255" key="2"/>
<evidence type="ECO:0000305" key="3"/>
<geneLocation type="chloroplast"/>